<organismHost>
    <name type="scientific">Marmota monax</name>
    <name type="common">Woodchuck</name>
    <dbReference type="NCBI Taxonomy" id="9995"/>
</organismHost>
<proteinExistence type="inferred from homology"/>
<accession>P03143</accession>
<accession>Q83759</accession>
<keyword id="KW-0007">Acetylation</keyword>
<keyword id="KW-0024">Alternative initiation</keyword>
<keyword id="KW-0025">Alternative splicing</keyword>
<keyword id="KW-1166">Caveolin-mediated endocytosis of virus by host</keyword>
<keyword id="KW-1170">Fusion of virus membrane with host endosomal membrane</keyword>
<keyword id="KW-1168">Fusion of virus membrane with host membrane</keyword>
<keyword id="KW-0325">Glycoprotein</keyword>
<keyword id="KW-0945">Host-virus interaction</keyword>
<keyword id="KW-0449">Lipoprotein</keyword>
<keyword id="KW-0472">Membrane</keyword>
<keyword id="KW-0519">Myristate</keyword>
<keyword id="KW-0812">Transmembrane</keyword>
<keyword id="KW-1133">Transmembrane helix</keyword>
<keyword id="KW-1161">Viral attachment to host cell</keyword>
<keyword id="KW-0261">Viral envelope protein</keyword>
<keyword id="KW-1162">Viral penetration into host cytoplasm</keyword>
<keyword id="KW-0946">Virion</keyword>
<keyword id="KW-1164">Virus endocytosis by host</keyword>
<keyword id="KW-1160">Virus entry into host cell</keyword>
<sequence length="426" mass="48404">MGNNIKVTFNPDKIAAWWPAVGTYYTTTYPQNQSVFQPGIYQTTSLVNPKTQQELDSVLINRYKQIDWNTWQGFPVDQKLPLVNRDPPPKSAQTFEIKPGPIIVPGIRDIPRGLVPPQTPTNRDQGRKPTPPTPPLRDTHPHLTMKNQTFHLQGFVDGLRDLTTTERQHNAYGDPFTTLSPVVPTVSTILSPPSTTGDPAQSPEMSPSSLLGLLAGLQVVYFLWTKILTIAQNLDWWWTSLSFPGGIPECTGQNSQFQTCKHLPTSCPPTCNGFRWMYLRRFIIYLLVLLLCLIFLLVLLDWKGLIPVCPIQPTTETTVNCRQCTISVQDMYTPPYCCCLKPTAGNCTCWPIPSSWALGNYLWEWALARFSWLNLLVPLLQWLGGISLIAWFLLIWMIWFWGPALLSILPPFIPIFVLFFLIWVYI</sequence>
<organism>
    <name type="scientific">Woodchuck hepatitis B virus (isolate 1)</name>
    <name type="common">WHV</name>
    <dbReference type="NCBI Taxonomy" id="10430"/>
    <lineage>
        <taxon>Viruses</taxon>
        <taxon>Riboviria</taxon>
        <taxon>Pararnavirae</taxon>
        <taxon>Artverviricota</taxon>
        <taxon>Revtraviricetes</taxon>
        <taxon>Blubervirales</taxon>
        <taxon>Hepadnaviridae</taxon>
        <taxon>Orthohepadnavirus</taxon>
        <taxon>Woodchuck hepatitis virus</taxon>
    </lineage>
</organism>
<dbReference type="EMBL" id="J02442">
    <property type="protein sequence ID" value="AAA46760.1"/>
    <property type="molecule type" value="Genomic_DNA"/>
</dbReference>
<dbReference type="PIR" id="A03707">
    <property type="entry name" value="SAVLC"/>
</dbReference>
<dbReference type="SMR" id="P03143"/>
<dbReference type="GlyCosmos" id="P03143">
    <property type="glycosylation" value="2 sites, No reported glycans"/>
</dbReference>
<dbReference type="Proteomes" id="UP000007631">
    <property type="component" value="Genome"/>
</dbReference>
<dbReference type="GO" id="GO:0016020">
    <property type="term" value="C:membrane"/>
    <property type="evidence" value="ECO:0007669"/>
    <property type="project" value="UniProtKB-UniRule"/>
</dbReference>
<dbReference type="GO" id="GO:0019031">
    <property type="term" value="C:viral envelope"/>
    <property type="evidence" value="ECO:0007669"/>
    <property type="project" value="UniProtKB-KW"/>
</dbReference>
<dbReference type="GO" id="GO:0055036">
    <property type="term" value="C:virion membrane"/>
    <property type="evidence" value="ECO:0007669"/>
    <property type="project" value="UniProtKB-SubCell"/>
</dbReference>
<dbReference type="GO" id="GO:0075513">
    <property type="term" value="P:caveolin-mediated endocytosis of virus by host cell"/>
    <property type="evidence" value="ECO:0007669"/>
    <property type="project" value="UniProtKB-KW"/>
</dbReference>
<dbReference type="GO" id="GO:0039654">
    <property type="term" value="P:fusion of virus membrane with host endosome membrane"/>
    <property type="evidence" value="ECO:0007669"/>
    <property type="project" value="UniProtKB-KW"/>
</dbReference>
<dbReference type="GO" id="GO:0019062">
    <property type="term" value="P:virion attachment to host cell"/>
    <property type="evidence" value="ECO:0007669"/>
    <property type="project" value="UniProtKB-UniRule"/>
</dbReference>
<dbReference type="HAMAP" id="MF_04075">
    <property type="entry name" value="HBV_HBSAG"/>
    <property type="match status" value="1"/>
</dbReference>
<dbReference type="InterPro" id="IPR000349">
    <property type="entry name" value="HBV_HBSAG"/>
</dbReference>
<dbReference type="Pfam" id="PF00695">
    <property type="entry name" value="vMSA"/>
    <property type="match status" value="1"/>
</dbReference>
<evidence type="ECO:0000250" key="1">
    <source>
        <dbReference type="UniProtKB" id="P03138"/>
    </source>
</evidence>
<evidence type="ECO:0000250" key="2">
    <source>
        <dbReference type="UniProtKB" id="P03141"/>
    </source>
</evidence>
<evidence type="ECO:0000255" key="3">
    <source>
        <dbReference type="HAMAP-Rule" id="MF_04075"/>
    </source>
</evidence>
<evidence type="ECO:0000256" key="4">
    <source>
        <dbReference type="SAM" id="MobiDB-lite"/>
    </source>
</evidence>
<evidence type="ECO:0000305" key="5"/>
<protein>
    <recommendedName>
        <fullName evidence="3">Large envelope protein</fullName>
    </recommendedName>
    <alternativeName>
        <fullName evidence="3">L glycoprotein</fullName>
    </alternativeName>
    <alternativeName>
        <fullName evidence="3">L-HBsAg</fullName>
        <shortName evidence="3">LHB</shortName>
    </alternativeName>
    <alternativeName>
        <fullName evidence="3">Large S protein</fullName>
    </alternativeName>
    <alternativeName>
        <fullName evidence="3">Large surface protein</fullName>
    </alternativeName>
    <alternativeName>
        <fullName evidence="3">Major surface antigen</fullName>
    </alternativeName>
</protein>
<feature type="initiator methionine" description="Removed; by host" evidence="3">
    <location>
        <position position="1"/>
    </location>
</feature>
<feature type="chain" id="PRO_0000038115" description="Large envelope protein" evidence="3">
    <location>
        <begin position="2"/>
        <end position="426"/>
    </location>
</feature>
<feature type="topological domain" description="Intravirion; in internal conformation" evidence="3">
    <location>
        <begin position="2"/>
        <end position="281"/>
    </location>
</feature>
<feature type="topological domain" description="Virion surface; in external conformation" evidence="3">
    <location>
        <begin position="2"/>
        <end position="209"/>
    </location>
</feature>
<feature type="transmembrane region" description="Helical; Name=TM1; Note=In external conformation" evidence="3">
    <location>
        <begin position="210"/>
        <end position="230"/>
    </location>
</feature>
<feature type="topological domain" description="Intravirion; in external conformation" evidence="3">
    <location>
        <begin position="231"/>
        <end position="281"/>
    </location>
</feature>
<feature type="transmembrane region" description="Helical; Name=TM2" evidence="3">
    <location>
        <begin position="282"/>
        <end position="302"/>
    </location>
</feature>
<feature type="topological domain" description="Virion surface" evidence="3">
    <location>
        <begin position="303"/>
        <end position="374"/>
    </location>
</feature>
<feature type="transmembrane region" description="Helical" evidence="3">
    <location>
        <begin position="375"/>
        <end position="395"/>
    </location>
</feature>
<feature type="topological domain" description="Intravirion" evidence="3">
    <location>
        <begin position="396"/>
        <end position="401"/>
    </location>
</feature>
<feature type="transmembrane region" description="Helical; Name=TM3" evidence="3">
    <location>
        <begin position="402"/>
        <end position="424"/>
    </location>
</feature>
<feature type="topological domain" description="Virion surface" evidence="3">
    <location>
        <begin position="425"/>
        <end position="426"/>
    </location>
</feature>
<feature type="region of interest" description="Pre-S" evidence="3">
    <location>
        <begin position="2"/>
        <end position="202"/>
    </location>
</feature>
<feature type="region of interest" description="Pre-S1" evidence="3">
    <location>
        <begin position="2"/>
        <end position="143"/>
    </location>
</feature>
<feature type="region of interest" description="Disordered" evidence="4">
    <location>
        <begin position="107"/>
        <end position="142"/>
    </location>
</feature>
<feature type="region of interest" description="Pre-S2" evidence="3">
    <location>
        <begin position="144"/>
        <end position="202"/>
    </location>
</feature>
<feature type="lipid moiety-binding region" description="N-myristoyl glycine; by host" evidence="3">
    <location>
        <position position="2"/>
    </location>
</feature>
<feature type="glycosylation site" description="N-linked (GlcNAc...) asparagine; by host" evidence="3">
    <location>
        <position position="346"/>
    </location>
</feature>
<feature type="splice variant" id="VSP_031452" description="In isoform S." evidence="5">
    <location>
        <begin position="1"/>
        <end position="204"/>
    </location>
</feature>
<feature type="splice variant" id="VSP_031453" description="In isoform M." evidence="5">
    <location>
        <begin position="1"/>
        <end position="144"/>
    </location>
</feature>
<feature type="glycosylation site" description="N-linked (GlcNAc...) asparagine" evidence="1">
    <location sequence="P03143-2">
        <position position="3"/>
    </location>
</feature>
<reference key="1">
    <citation type="journal article" date="1982" name="J. Virol.">
        <title>Nucleotide sequence of a cloned woodchuck hepatitis virus genome: comparison with the hepatitis B virus sequence.</title>
        <authorList>
            <person name="Galibert F."/>
            <person name="Chen T.N."/>
            <person name="Mandart E."/>
        </authorList>
    </citation>
    <scope>NUCLEOTIDE SEQUENCE [GENOMIC DNA]</scope>
</reference>
<reference key="2">
    <citation type="journal article" date="1996" name="Intervirology">
        <title>Functions of the large hepatitis B virus surface protein in viral particle morphogenesis.</title>
        <authorList>
            <person name="Bruss V."/>
            <person name="Gerhardt E."/>
            <person name="Vieluf K."/>
            <person name="Wunderlich G."/>
        </authorList>
    </citation>
    <scope>REVIEW</scope>
</reference>
<reference key="3">
    <citation type="journal article" date="1998" name="Adv. Exp. Med. Biol.">
        <title>Role of glycan processing in hepatitis B virus envelope protein trafficking.</title>
        <authorList>
            <person name="Block T.M."/>
            <person name="Lu X."/>
            <person name="Mehta A."/>
            <person name="Park J."/>
            <person name="Blumberg B.S."/>
            <person name="Dwek R."/>
        </authorList>
    </citation>
    <scope>REVIEW</scope>
</reference>
<reference key="4">
    <citation type="journal article" date="2004" name="Virus Res.">
        <title>Envelopment of the hepatitis B virus nucleocapsid.</title>
        <authorList>
            <person name="Bruss V."/>
        </authorList>
    </citation>
    <scope>REVIEW</scope>
</reference>
<reference key="5">
    <citation type="journal article" date="2006" name="Cancer Sci.">
        <title>Hepatitis B virus pre-S mutants, endoplasmic reticulum stress and hepatocarcinogenesis.</title>
        <authorList>
            <person name="Wang H.C."/>
            <person name="Huang W."/>
            <person name="Lai M.D."/>
            <person name="Su I.J."/>
        </authorList>
    </citation>
    <scope>REVIEW</scope>
</reference>
<gene>
    <name evidence="3" type="primary">S</name>
</gene>
<name>HBSAG_WHV1</name>
<comment type="function">
    <text evidence="3">The large envelope protein exists in two topological conformations, one which is termed 'external' or Le-HBsAg and the other 'internal' or Li-HBsAg. In its external conformation the protein attaches the virus to cell receptors and thereby initiating infection. This interaction determines the species specificity and liver tropism. This attachment induces virion internalization predominantly through caveolin-mediated endocytosis. The large envelope protein also assures fusion between virion membrane and endosomal membrane. In its internal conformation the protein plays a role in virion morphogenesis and mediates the contact with the nucleocapsid like a matrix protein.</text>
</comment>
<comment type="function">
    <text evidence="3">The middle envelope protein plays an important role in the budding of the virion. It is involved in the induction of budding in a nucleocapsid independent way. In this process the majority of envelope proteins bud to form subviral lipoprotein particles of 22 nm of diameter that do not contain a nucleocapsid.</text>
</comment>
<comment type="subunit">
    <molecule>Isoform L</molecule>
    <text evidence="2">In its internal form (Li-HBsAg), interacts with the capsid protein and with the isoform S. Interacts with host chaperone CANX.</text>
</comment>
<comment type="subunit">
    <molecule>Isoform M</molecule>
    <text evidence="2">Associates with host chaperone CANX through its pre-S2 N glycan; this association may be essential for isoform M proper secretion.</text>
</comment>
<comment type="subunit">
    <molecule>Isoform S</molecule>
    <text evidence="2">Interacts with isoform L. Interacts with the antigens of satellite virus HDV (HDVAgs); this interaction is required for encapsidation of HDV genomic RNA.</text>
</comment>
<comment type="subcellular location">
    <subcellularLocation>
        <location evidence="3">Virion membrane</location>
    </subcellularLocation>
</comment>
<comment type="alternative products">
    <event type="alternative splicing"/>
    <event type="alternative initiation"/>
    <isoform>
        <id>P03143-1</id>
        <name>L</name>
        <name>Large envelope protein</name>
        <name>LHB</name>
        <name>L-HBsAg</name>
        <sequence type="displayed"/>
    </isoform>
    <isoform>
        <id>P03143-2</id>
        <name>M</name>
        <name>Middle envelope protein</name>
        <name>MHB</name>
        <name>M-HBsAg</name>
        <sequence type="described" ref="VSP_031453"/>
    </isoform>
    <isoform>
        <id>P03143-3</id>
        <name>S</name>
        <name>Small envelope protein</name>
        <name>SHB</name>
        <name>S-HBsAg</name>
        <sequence type="described" ref="VSP_031452"/>
    </isoform>
</comment>
<comment type="domain">
    <text evidence="3">The large envelope protein is synthesized with the pre-S region at the cytosolic side of the endoplasmic reticulum and, hence will be within the virion after budding. Therefore the pre-S region is not N-glycosylated. Later a post-translational translocation of N-terminal pre-S and TM1 domains occur in about 50% of proteins at the virion surface. These molecules change their topology by an unknown mechanism, resulting in exposure of pre-S region at virion surface. For isoform M in contrast, the pre-S2 region is translocated cotranslationally to the endoplasmic reticulum lumen and is N-glycosylated.</text>
</comment>
<comment type="PTM">
    <text evidence="3">Isoform M is N-terminally acetylated by host at a ratio of 90%, and N-glycosylated by host at the pre-S2 region.</text>
</comment>
<comment type="PTM">
    <text evidence="3">Myristoylated.</text>
</comment>
<comment type="similarity">
    <text evidence="3">Belongs to the orthohepadnavirus major surface antigen family.</text>
</comment>